<protein>
    <recommendedName>
        <fullName>Putative pumilio homolog 8, chloroplastic</fullName>
        <shortName>APUM-8</shortName>
        <shortName>AtPUM8</shortName>
    </recommendedName>
</protein>
<comment type="function">
    <text evidence="1">Sequence-specific RNA-binding protein that regulates translation and mRNA stability by binding the 3'-UTR of target mRNAs.</text>
</comment>
<comment type="subcellular location">
    <subcellularLocation>
        <location evidence="6">Plastid</location>
        <location evidence="6">Chloroplast</location>
    </subcellularLocation>
    <subcellularLocation>
        <location evidence="5">Cytoplasm</location>
    </subcellularLocation>
</comment>
<comment type="domain">
    <text evidence="1">The pumilio repeats mediate the association with RNA by packing together to form a right-handed superhelix that approximates a half donut. The number as well as the specific sequence of the repeats determine the specificity for target mRNAs (By similarity).</text>
</comment>
<comment type="sequence caution" evidence="6">
    <conflict type="erroneous initiation">
        <sequence resource="EMBL-CDS" id="AAF87849"/>
    </conflict>
    <text>Truncated N-terminus.</text>
</comment>
<gene>
    <name type="primary">APUM8</name>
    <name type="ordered locus">At1g22240</name>
    <name type="ORF">F16L1.3</name>
</gene>
<dbReference type="EMBL" id="AC073942">
    <property type="protein sequence ID" value="AAF87849.1"/>
    <property type="status" value="ALT_INIT"/>
    <property type="molecule type" value="Genomic_DNA"/>
</dbReference>
<dbReference type="EMBL" id="CP002684">
    <property type="protein sequence ID" value="AEE30215.1"/>
    <property type="molecule type" value="Genomic_DNA"/>
</dbReference>
<dbReference type="PIR" id="B86355">
    <property type="entry name" value="B86355"/>
</dbReference>
<dbReference type="RefSeq" id="NP_173643.1">
    <property type="nucleotide sequence ID" value="NM_102074.2"/>
</dbReference>
<dbReference type="SMR" id="Q9LM20"/>
<dbReference type="STRING" id="3702.Q9LM20"/>
<dbReference type="PaxDb" id="3702-AT1G22240.1"/>
<dbReference type="ProteomicsDB" id="224864"/>
<dbReference type="EnsemblPlants" id="AT1G22240.1">
    <property type="protein sequence ID" value="AT1G22240.1"/>
    <property type="gene ID" value="AT1G22240"/>
</dbReference>
<dbReference type="GeneID" id="838829"/>
<dbReference type="Gramene" id="AT1G22240.1">
    <property type="protein sequence ID" value="AT1G22240.1"/>
    <property type="gene ID" value="AT1G22240"/>
</dbReference>
<dbReference type="KEGG" id="ath:AT1G22240"/>
<dbReference type="Araport" id="AT1G22240"/>
<dbReference type="TAIR" id="AT1G22240">
    <property type="gene designation" value="PUM8"/>
</dbReference>
<dbReference type="eggNOG" id="KOG2049">
    <property type="taxonomic scope" value="Eukaryota"/>
</dbReference>
<dbReference type="HOGENOM" id="CLU_004017_5_0_1"/>
<dbReference type="InParanoid" id="Q9LM20"/>
<dbReference type="OMA" id="FEILCMN"/>
<dbReference type="OrthoDB" id="668540at2759"/>
<dbReference type="PhylomeDB" id="Q9LM20"/>
<dbReference type="PRO" id="PR:Q9LM20"/>
<dbReference type="Proteomes" id="UP000006548">
    <property type="component" value="Chromosome 1"/>
</dbReference>
<dbReference type="ExpressionAtlas" id="Q9LM20">
    <property type="expression patterns" value="baseline and differential"/>
</dbReference>
<dbReference type="GO" id="GO:0009507">
    <property type="term" value="C:chloroplast"/>
    <property type="evidence" value="ECO:0007669"/>
    <property type="project" value="UniProtKB-SubCell"/>
</dbReference>
<dbReference type="GO" id="GO:0005737">
    <property type="term" value="C:cytoplasm"/>
    <property type="evidence" value="ECO:0000314"/>
    <property type="project" value="TAIR"/>
</dbReference>
<dbReference type="GO" id="GO:0003723">
    <property type="term" value="F:RNA binding"/>
    <property type="evidence" value="ECO:0007669"/>
    <property type="project" value="UniProtKB-KW"/>
</dbReference>
<dbReference type="GO" id="GO:0006417">
    <property type="term" value="P:regulation of translation"/>
    <property type="evidence" value="ECO:0007669"/>
    <property type="project" value="UniProtKB-KW"/>
</dbReference>
<dbReference type="CDD" id="cd07920">
    <property type="entry name" value="Pumilio"/>
    <property type="match status" value="1"/>
</dbReference>
<dbReference type="FunFam" id="1.25.10.10:FF:000237">
    <property type="entry name" value="Pumilio homolog 9"/>
    <property type="match status" value="1"/>
</dbReference>
<dbReference type="Gene3D" id="1.25.10.10">
    <property type="entry name" value="Leucine-rich Repeat Variant"/>
    <property type="match status" value="1"/>
</dbReference>
<dbReference type="InterPro" id="IPR011989">
    <property type="entry name" value="ARM-like"/>
</dbReference>
<dbReference type="InterPro" id="IPR016024">
    <property type="entry name" value="ARM-type_fold"/>
</dbReference>
<dbReference type="InterPro" id="IPR033133">
    <property type="entry name" value="PUM-HD"/>
</dbReference>
<dbReference type="InterPro" id="IPR033712">
    <property type="entry name" value="Pumilio_RNA-bd"/>
</dbReference>
<dbReference type="InterPro" id="IPR001313">
    <property type="entry name" value="Pumilio_RNA-bd_rpt"/>
</dbReference>
<dbReference type="PANTHER" id="PTHR12537:SF169">
    <property type="entry name" value="PUMILIO HOMOLOG 8, CHLOROPLASTIC-RELATED"/>
    <property type="match status" value="1"/>
</dbReference>
<dbReference type="PANTHER" id="PTHR12537">
    <property type="entry name" value="RNA BINDING PROTEIN PUMILIO-RELATED"/>
    <property type="match status" value="1"/>
</dbReference>
<dbReference type="Pfam" id="PF00806">
    <property type="entry name" value="PUF"/>
    <property type="match status" value="8"/>
</dbReference>
<dbReference type="SMART" id="SM00025">
    <property type="entry name" value="Pumilio"/>
    <property type="match status" value="8"/>
</dbReference>
<dbReference type="SUPFAM" id="SSF48371">
    <property type="entry name" value="ARM repeat"/>
    <property type="match status" value="1"/>
</dbReference>
<dbReference type="PROSITE" id="PS50302">
    <property type="entry name" value="PUM"/>
    <property type="match status" value="8"/>
</dbReference>
<dbReference type="PROSITE" id="PS50303">
    <property type="entry name" value="PUM_HD"/>
    <property type="match status" value="1"/>
</dbReference>
<evidence type="ECO:0000250" key="1"/>
<evidence type="ECO:0000255" key="2"/>
<evidence type="ECO:0000255" key="3">
    <source>
        <dbReference type="PROSITE-ProRule" id="PRU00318"/>
    </source>
</evidence>
<evidence type="ECO:0000256" key="4">
    <source>
        <dbReference type="SAM" id="MobiDB-lite"/>
    </source>
</evidence>
<evidence type="ECO:0000269" key="5">
    <source>
    </source>
</evidence>
<evidence type="ECO:0000305" key="6"/>
<sequence length="515" mass="58014">MMRGEFGEASSLSRSPSSPLQTEPHPQSPKFYRNHYVFSGDHSSYNSSSRFCLRSPSDYSLSSYFSNGLCSSEDGSSQFASPPLDGLMTKYNFGGDDLGLCESFDLLNVGEEDKTHHQTQRSSFGNYEANGDGGFRYYSGFGVDQKDHQISNSWNLGMQSCNMNNYSVPVHGKSGVGALFDHQGISSNPNESLPKVSEFQGYVYFMAKDQHGCRFLQWIFEDGSALDALVIFSEVIPHVVELMMDPFGNYLMQKLLDVCNEEQRTQIILMVTSEPGQLIRISLNAYGTRVVQRLVESIKTRKQISLVKSALRPGFLNLIRDLNGNHVIQRCLQCLSTEDNEFIFEDATKFCIDIATHRHGCCVLQKCIAYSSGLQREKLVTEISRNSLFLAQDPYGNYAVQFVLELRDFSAIAAMLAQLKGHYVELSMQKFSSHMVERCLTHCPESRPQIVRELISVPHFDILIQDPYANFVIQAALAVTKGSLHATLVEVIRPHSILRNNPYCKRIFSRNLLKN</sequence>
<accession>Q9LM20</accession>
<organism>
    <name type="scientific">Arabidopsis thaliana</name>
    <name type="common">Mouse-ear cress</name>
    <dbReference type="NCBI Taxonomy" id="3702"/>
    <lineage>
        <taxon>Eukaryota</taxon>
        <taxon>Viridiplantae</taxon>
        <taxon>Streptophyta</taxon>
        <taxon>Embryophyta</taxon>
        <taxon>Tracheophyta</taxon>
        <taxon>Spermatophyta</taxon>
        <taxon>Magnoliopsida</taxon>
        <taxon>eudicotyledons</taxon>
        <taxon>Gunneridae</taxon>
        <taxon>Pentapetalae</taxon>
        <taxon>rosids</taxon>
        <taxon>malvids</taxon>
        <taxon>Brassicales</taxon>
        <taxon>Brassicaceae</taxon>
        <taxon>Camelineae</taxon>
        <taxon>Arabidopsis</taxon>
    </lineage>
</organism>
<name>PUM8_ARATH</name>
<reference key="1">
    <citation type="journal article" date="2000" name="Nature">
        <title>Sequence and analysis of chromosome 1 of the plant Arabidopsis thaliana.</title>
        <authorList>
            <person name="Theologis A."/>
            <person name="Ecker J.R."/>
            <person name="Palm C.J."/>
            <person name="Federspiel N.A."/>
            <person name="Kaul S."/>
            <person name="White O."/>
            <person name="Alonso J."/>
            <person name="Altafi H."/>
            <person name="Araujo R."/>
            <person name="Bowman C.L."/>
            <person name="Brooks S.Y."/>
            <person name="Buehler E."/>
            <person name="Chan A."/>
            <person name="Chao Q."/>
            <person name="Chen H."/>
            <person name="Cheuk R.F."/>
            <person name="Chin C.W."/>
            <person name="Chung M.K."/>
            <person name="Conn L."/>
            <person name="Conway A.B."/>
            <person name="Conway A.R."/>
            <person name="Creasy T.H."/>
            <person name="Dewar K."/>
            <person name="Dunn P."/>
            <person name="Etgu P."/>
            <person name="Feldblyum T.V."/>
            <person name="Feng J.-D."/>
            <person name="Fong B."/>
            <person name="Fujii C.Y."/>
            <person name="Gill J.E."/>
            <person name="Goldsmith A.D."/>
            <person name="Haas B."/>
            <person name="Hansen N.F."/>
            <person name="Hughes B."/>
            <person name="Huizar L."/>
            <person name="Hunter J.L."/>
            <person name="Jenkins J."/>
            <person name="Johnson-Hopson C."/>
            <person name="Khan S."/>
            <person name="Khaykin E."/>
            <person name="Kim C.J."/>
            <person name="Koo H.L."/>
            <person name="Kremenetskaia I."/>
            <person name="Kurtz D.B."/>
            <person name="Kwan A."/>
            <person name="Lam B."/>
            <person name="Langin-Hooper S."/>
            <person name="Lee A."/>
            <person name="Lee J.M."/>
            <person name="Lenz C.A."/>
            <person name="Li J.H."/>
            <person name="Li Y.-P."/>
            <person name="Lin X."/>
            <person name="Liu S.X."/>
            <person name="Liu Z.A."/>
            <person name="Luros J.S."/>
            <person name="Maiti R."/>
            <person name="Marziali A."/>
            <person name="Militscher J."/>
            <person name="Miranda M."/>
            <person name="Nguyen M."/>
            <person name="Nierman W.C."/>
            <person name="Osborne B.I."/>
            <person name="Pai G."/>
            <person name="Peterson J."/>
            <person name="Pham P.K."/>
            <person name="Rizzo M."/>
            <person name="Rooney T."/>
            <person name="Rowley D."/>
            <person name="Sakano H."/>
            <person name="Salzberg S.L."/>
            <person name="Schwartz J.R."/>
            <person name="Shinn P."/>
            <person name="Southwick A.M."/>
            <person name="Sun H."/>
            <person name="Tallon L.J."/>
            <person name="Tambunga G."/>
            <person name="Toriumi M.J."/>
            <person name="Town C.D."/>
            <person name="Utterback T."/>
            <person name="Van Aken S."/>
            <person name="Vaysberg M."/>
            <person name="Vysotskaia V.S."/>
            <person name="Walker M."/>
            <person name="Wu D."/>
            <person name="Yu G."/>
            <person name="Fraser C.M."/>
            <person name="Venter J.C."/>
            <person name="Davis R.W."/>
        </authorList>
    </citation>
    <scope>NUCLEOTIDE SEQUENCE [LARGE SCALE GENOMIC DNA]</scope>
    <source>
        <strain>cv. Columbia</strain>
    </source>
</reference>
<reference key="2">
    <citation type="journal article" date="2017" name="Plant J.">
        <title>Araport11: a complete reannotation of the Arabidopsis thaliana reference genome.</title>
        <authorList>
            <person name="Cheng C.Y."/>
            <person name="Krishnakumar V."/>
            <person name="Chan A.P."/>
            <person name="Thibaud-Nissen F."/>
            <person name="Schobel S."/>
            <person name="Town C.D."/>
        </authorList>
    </citation>
    <scope>GENOME REANNOTATION</scope>
    <source>
        <strain>cv. Columbia</strain>
    </source>
</reference>
<reference key="3">
    <citation type="journal article" date="2009" name="FEBS J.">
        <title>Molecular characterization of Arabidopsis thaliana PUF proteins -- binding specificity and target candidates.</title>
        <authorList>
            <person name="Francischini C.W."/>
            <person name="Quaggio R.B."/>
        </authorList>
    </citation>
    <scope>GENE FAMILY</scope>
</reference>
<reference key="4">
    <citation type="journal article" date="2010" name="BMC Plant Biol.">
        <title>The Puf family of RNA-binding proteins in plants: phylogeny, structural modeling, activity and subcellular localization.</title>
        <authorList>
            <person name="Tam P.P."/>
            <person name="Barrette-Ng I.H."/>
            <person name="Simon D.M."/>
            <person name="Tam M.W."/>
            <person name="Ang A.L."/>
            <person name="Muench D.G."/>
        </authorList>
    </citation>
    <scope>GENE FAMILY</scope>
    <scope>SUBCELLULAR LOCATION</scope>
</reference>
<proteinExistence type="inferred from homology"/>
<feature type="transit peptide" description="Chloroplast" evidence="2">
    <location>
        <begin position="1"/>
        <end position="70"/>
    </location>
</feature>
<feature type="chain" id="PRO_0000401390" description="Putative pumilio homolog 8, chloroplastic">
    <location>
        <begin position="71"/>
        <end position="515"/>
    </location>
</feature>
<feature type="domain" description="PUM-HD" evidence="3">
    <location>
        <begin position="174"/>
        <end position="515"/>
    </location>
</feature>
<feature type="repeat" description="Pumilio 1">
    <location>
        <begin position="198"/>
        <end position="233"/>
    </location>
</feature>
<feature type="repeat" description="Pumilio 2">
    <location>
        <begin position="234"/>
        <end position="269"/>
    </location>
</feature>
<feature type="repeat" description="Pumilio 3">
    <location>
        <begin position="270"/>
        <end position="308"/>
    </location>
</feature>
<feature type="repeat" description="Pumilio 4">
    <location>
        <begin position="310"/>
        <end position="345"/>
    </location>
</feature>
<feature type="repeat" description="Pumilio 5">
    <location>
        <begin position="346"/>
        <end position="381"/>
    </location>
</feature>
<feature type="repeat" description="Pumilio 6">
    <location>
        <begin position="382"/>
        <end position="417"/>
    </location>
</feature>
<feature type="repeat" description="Pumilio 7">
    <location>
        <begin position="418"/>
        <end position="456"/>
    </location>
</feature>
<feature type="repeat" description="Pumilio 8">
    <location>
        <begin position="457"/>
        <end position="490"/>
    </location>
</feature>
<feature type="region of interest" description="Disordered" evidence="4">
    <location>
        <begin position="1"/>
        <end position="33"/>
    </location>
</feature>
<feature type="compositionally biased region" description="Low complexity" evidence="4">
    <location>
        <begin position="10"/>
        <end position="20"/>
    </location>
</feature>
<keyword id="KW-0150">Chloroplast</keyword>
<keyword id="KW-0963">Cytoplasm</keyword>
<keyword id="KW-0934">Plastid</keyword>
<keyword id="KW-1185">Reference proteome</keyword>
<keyword id="KW-0677">Repeat</keyword>
<keyword id="KW-0694">RNA-binding</keyword>
<keyword id="KW-0809">Transit peptide</keyword>
<keyword id="KW-0810">Translation regulation</keyword>